<organism>
    <name type="scientific">Chlorocebus aethiops</name>
    <name type="common">Green monkey</name>
    <name type="synonym">Cercopithecus aethiops</name>
    <dbReference type="NCBI Taxonomy" id="9534"/>
    <lineage>
        <taxon>Eukaryota</taxon>
        <taxon>Metazoa</taxon>
        <taxon>Chordata</taxon>
        <taxon>Craniata</taxon>
        <taxon>Vertebrata</taxon>
        <taxon>Euteleostomi</taxon>
        <taxon>Mammalia</taxon>
        <taxon>Eutheria</taxon>
        <taxon>Euarchontoglires</taxon>
        <taxon>Primates</taxon>
        <taxon>Haplorrhini</taxon>
        <taxon>Catarrhini</taxon>
        <taxon>Cercopithecidae</taxon>
        <taxon>Cercopithecinae</taxon>
        <taxon>Chlorocebus</taxon>
    </lineage>
</organism>
<protein>
    <recommendedName>
        <fullName>Tumor protein p73</fullName>
    </recommendedName>
    <alternativeName>
        <fullName>p53-like transcription factor</fullName>
    </alternativeName>
    <alternativeName>
        <fullName>p53-related protein</fullName>
    </alternativeName>
</protein>
<accession>Q9XSK8</accession>
<accession>Q9TSQ9</accession>
<reference key="1">
    <citation type="submission" date="1997-02" db="EMBL/GenBank/DDBJ databases">
        <authorList>
            <person name="Caput D."/>
        </authorList>
    </citation>
    <scope>NUCLEOTIDE SEQUENCE [MRNA] (ISOFORMS ALPHA AND BETA)</scope>
    <source>
        <tissue>Kidney</tissue>
    </source>
</reference>
<keyword id="KW-0010">Activator</keyword>
<keyword id="KW-0025">Alternative splicing</keyword>
<keyword id="KW-0053">Apoptosis</keyword>
<keyword id="KW-0131">Cell cycle</keyword>
<keyword id="KW-0963">Cytoplasm</keyword>
<keyword id="KW-0238">DNA-binding</keyword>
<keyword id="KW-1017">Isopeptide bond</keyword>
<keyword id="KW-0479">Metal-binding</keyword>
<keyword id="KW-0539">Nucleus</keyword>
<keyword id="KW-0597">Phosphoprotein</keyword>
<keyword id="KW-0804">Transcription</keyword>
<keyword id="KW-0805">Transcription regulation</keyword>
<keyword id="KW-0043">Tumor suppressor</keyword>
<keyword id="KW-0832">Ubl conjugation</keyword>
<keyword id="KW-0862">Zinc</keyword>
<gene>
    <name type="primary">TP73</name>
    <name type="synonym">P73</name>
</gene>
<feature type="chain" id="PRO_0000185727" description="Tumor protein p73">
    <location>
        <begin position="1"/>
        <end position="637"/>
    </location>
</feature>
<feature type="domain" description="SAM">
    <location>
        <begin position="485"/>
        <end position="551"/>
    </location>
</feature>
<feature type="region of interest" description="Transactivation" evidence="1">
    <location>
        <begin position="1"/>
        <end position="46"/>
    </location>
</feature>
<feature type="region of interest" description="Disordered" evidence="5">
    <location>
        <begin position="78"/>
        <end position="104"/>
    </location>
</feature>
<feature type="region of interest" description="DNA-binding" evidence="4">
    <location>
        <begin position="131"/>
        <end position="310"/>
    </location>
</feature>
<feature type="region of interest" description="Disordered" evidence="5">
    <location>
        <begin position="301"/>
        <end position="351"/>
    </location>
</feature>
<feature type="region of interest" description="Oligomerization" evidence="4">
    <location>
        <begin position="345"/>
        <end position="386"/>
    </location>
</feature>
<feature type="region of interest" description="Interaction with HIPK2" evidence="1">
    <location>
        <begin position="345"/>
        <end position="380"/>
    </location>
</feature>
<feature type="short sequence motif" description="PPxY motif">
    <location>
        <begin position="483"/>
        <end position="487"/>
    </location>
</feature>
<feature type="compositionally biased region" description="Polar residues" evidence="5">
    <location>
        <begin position="94"/>
        <end position="104"/>
    </location>
</feature>
<feature type="compositionally biased region" description="Basic and acidic residues" evidence="5">
    <location>
        <begin position="301"/>
        <end position="311"/>
    </location>
</feature>
<feature type="binding site" evidence="1">
    <location>
        <position position="194"/>
    </location>
    <ligand>
        <name>Zn(2+)</name>
        <dbReference type="ChEBI" id="CHEBI:29105"/>
    </ligand>
</feature>
<feature type="binding site" evidence="1">
    <location>
        <position position="197"/>
    </location>
    <ligand>
        <name>Zn(2+)</name>
        <dbReference type="ChEBI" id="CHEBI:29105"/>
    </ligand>
</feature>
<feature type="binding site" evidence="1">
    <location>
        <position position="258"/>
    </location>
    <ligand>
        <name>Zn(2+)</name>
        <dbReference type="ChEBI" id="CHEBI:29105"/>
    </ligand>
</feature>
<feature type="binding site" evidence="1">
    <location>
        <position position="262"/>
    </location>
    <ligand>
        <name>Zn(2+)</name>
        <dbReference type="ChEBI" id="CHEBI:29105"/>
    </ligand>
</feature>
<feature type="modified residue" description="Phosphothreonine" evidence="2">
    <location>
        <position position="27"/>
    </location>
</feature>
<feature type="modified residue" description="Phosphotyrosine; by SRC and HCK" evidence="2">
    <location>
        <position position="28"/>
    </location>
</feature>
<feature type="modified residue" description="Phosphotyrosine" evidence="2">
    <location>
        <position position="99"/>
    </location>
</feature>
<feature type="cross-link" description="Glycyl lysine isopeptide (Lys-Gly) (interchain with G-Cter in SUMO); in isoform Alpha" evidence="1">
    <location>
        <position position="628"/>
    </location>
</feature>
<feature type="cross-link" description="Glycyl lysine isopeptide (Lys-Gly) (interchain with G-Cter in SUMO2)" evidence="2">
    <location>
        <position position="628"/>
    </location>
</feature>
<feature type="splice variant" id="VSP_006537" description="In isoform Beta." evidence="6">
    <original>SFLTGLGCPNCIEYFTSQGLQSIYHLQNLTIEDLGALKIPEQYRMTIWRGLQDLKQGHDYGAAAQQLLRSSNAAAISIGGSGELQRQRVMEAVHFRVRHTITIPNRGGPGAGPDEWADFGFDLPDCKARKQPIKEEFTEAEIH</original>
    <variation>RTWGP</variation>
    <location>
        <begin position="495"/>
        <end position="637"/>
    </location>
</feature>
<sequence length="637" mass="69630">MAQSTTTSPDGGTTFEHLWSSLEPDSTYFDLPQSSRGNNEVVGGTDSSMDVFHLEGMTTSVMAQFNLLSSTMDQMSSRAASASPYTPEHAASVPTHSPYAQPSSTFDTMSPAPVIPSNTDYPGPHHFEVTFQQSSTAKSATWTYSPLLKKLYCQIAKTCPIQIKVSAPPPPGTAIRAMPVYKKAEHVTDIVKRCPNHELGRDFNEGQSAPASHLIRVEGNNLSQYVDDPVTGRQSVVVPYEPPQVGTEFTTILYNFMCNSSCVGGMNRRPILIIITLETRDGQVLGRRSFEGRICACPGRDRKADEDHYREQQALNESSAKNGAASKRAFKQSPPAVPALGPGVKKRRHGDEDTYYLQVRGRENFEILMKLKESLELMELVPQPLVDSYRQQQQLLQRPSHLQPPSYGPVLSPMNKVHGGVNKLPSVNQLVGQPPPHSSAATPNLGPVGSGMLNNHGHAVPANSEMTSSHGTQSMVSGSHCTPPPPYHADPSLVSFLTGLGCPNCIEYFTSQGLQSIYHLQNLTIEDLGALKIPEQYRMTIWRGLQDLKQGHDYGAAAQQLLRSSNAAAISIGGSGELQRQRVMEAVHFRVRHTITIPNRGGPGAGPDEWADFGFDLPDCKARKQPIKEEFTEAEIH</sequence>
<evidence type="ECO:0000250" key="1"/>
<evidence type="ECO:0000250" key="2">
    <source>
        <dbReference type="UniProtKB" id="O15350"/>
    </source>
</evidence>
<evidence type="ECO:0000250" key="3">
    <source>
        <dbReference type="UniProtKB" id="Q9JJP2"/>
    </source>
</evidence>
<evidence type="ECO:0000255" key="4"/>
<evidence type="ECO:0000256" key="5">
    <source>
        <dbReference type="SAM" id="MobiDB-lite"/>
    </source>
</evidence>
<evidence type="ECO:0000303" key="6">
    <source ref="1"/>
</evidence>
<evidence type="ECO:0000305" key="7"/>
<comment type="function">
    <text evidence="3">Participates in the apoptotic response to DNA damage. May be a tumor suppressor protein (By similarity). Is an activator of FOXJ1 expression, essential for the positive regulation of lung ciliated cell differentiation (By similarity).</text>
</comment>
<comment type="cofactor">
    <cofactor evidence="1">
        <name>Zn(2+)</name>
        <dbReference type="ChEBI" id="CHEBI:29105"/>
    </cofactor>
    <text evidence="1">Binds 1 zinc ion per subunit.</text>
</comment>
<comment type="subunit">
    <text evidence="1">Found in a complex with p53/TP53 and CABLES1. The C-terminal oligomerization domain binds to the ABL1 tyrosine kinase SH3 domain. Interacts with HECW2. Isoforms Alpha and Beta interact with HIPK2. Isoform Alpha interacts with RANBP9. Interacts with WWOX (By similarity). Isoform Beta interacts homotypically and with p53, whereas isoform Alpha does not. Interacts (via SAM domain) with FBXO45 (via B30.2/SPRY domain) (By similarity). Interacts with YAP1 (phosphorylated form). Interacts with HCK (via SH3 domain); this inhibits TP73 activity and degradation (By similarity).</text>
</comment>
<comment type="subcellular location">
    <subcellularLocation>
        <location evidence="1">Nucleus</location>
    </subcellularLocation>
    <subcellularLocation>
        <location evidence="1">Cytoplasm</location>
    </subcellularLocation>
    <text evidence="1">Accumulates in the nucleus in response to DNA damage.</text>
</comment>
<comment type="alternative products">
    <event type="alternative splicing"/>
    <isoform>
        <id>Q9XSK8-1</id>
        <name>Alpha</name>
        <sequence type="displayed"/>
    </isoform>
    <isoform>
        <id>Q9XSK8-2</id>
        <name>Beta</name>
        <sequence type="described" ref="VSP_006537"/>
    </isoform>
</comment>
<comment type="domain">
    <text>Possesses an acidic transactivation domain, a central DNA binding domain and a C-terminal oligomerization domain that binds to the ABL1 tyrosine kinase SH3 domain.</text>
</comment>
<comment type="domain">
    <text evidence="1">The PPxY motif mediates interaction with WWOX.</text>
</comment>
<comment type="PTM">
    <text evidence="1">Isoform Alpha (but not isoform Beta) is sumoylated on Lys-628, which potentiates proteasomal degradation but does not affect transcriptional activity.</text>
</comment>
<comment type="PTM">
    <text evidence="1">Polyubiquitinated by RCHY1/PIRH2; leading to its degradation by the proteasome.</text>
</comment>
<comment type="miscellaneous">
    <text evidence="1">Activated and stabilized by interaction with RANBP9.</text>
</comment>
<comment type="similarity">
    <text evidence="7">Belongs to the p53 family.</text>
</comment>
<proteinExistence type="evidence at transcript level"/>
<dbReference type="EMBL" id="Y11419">
    <property type="protein sequence ID" value="CAA72224.1"/>
    <property type="molecule type" value="mRNA"/>
</dbReference>
<dbReference type="EMBL" id="Y11419">
    <property type="protein sequence ID" value="CAA72225.1"/>
    <property type="molecule type" value="mRNA"/>
</dbReference>
<dbReference type="SMR" id="Q9XSK8"/>
<dbReference type="IntAct" id="Q9XSK8">
    <property type="interactions" value="1"/>
</dbReference>
<dbReference type="MINT" id="Q9XSK8"/>
<dbReference type="GO" id="GO:0005737">
    <property type="term" value="C:cytoplasm"/>
    <property type="evidence" value="ECO:0007669"/>
    <property type="project" value="UniProtKB-SubCell"/>
</dbReference>
<dbReference type="GO" id="GO:0005634">
    <property type="term" value="C:nucleus"/>
    <property type="evidence" value="ECO:0007669"/>
    <property type="project" value="UniProtKB-SubCell"/>
</dbReference>
<dbReference type="GO" id="GO:0000981">
    <property type="term" value="F:DNA-binding transcription factor activity, RNA polymerase II-specific"/>
    <property type="evidence" value="ECO:0000250"/>
    <property type="project" value="UniProtKB"/>
</dbReference>
<dbReference type="GO" id="GO:0046872">
    <property type="term" value="F:metal ion binding"/>
    <property type="evidence" value="ECO:0007669"/>
    <property type="project" value="UniProtKB-KW"/>
</dbReference>
<dbReference type="GO" id="GO:0000978">
    <property type="term" value="F:RNA polymerase II cis-regulatory region sequence-specific DNA binding"/>
    <property type="evidence" value="ECO:0007669"/>
    <property type="project" value="TreeGrafter"/>
</dbReference>
<dbReference type="GO" id="GO:0006915">
    <property type="term" value="P:apoptotic process"/>
    <property type="evidence" value="ECO:0007669"/>
    <property type="project" value="UniProtKB-KW"/>
</dbReference>
<dbReference type="GO" id="GO:0045944">
    <property type="term" value="P:positive regulation of transcription by RNA polymerase II"/>
    <property type="evidence" value="ECO:0000250"/>
    <property type="project" value="UniProtKB"/>
</dbReference>
<dbReference type="GO" id="GO:0051262">
    <property type="term" value="P:protein tetramerization"/>
    <property type="evidence" value="ECO:0007669"/>
    <property type="project" value="InterPro"/>
</dbReference>
<dbReference type="CDD" id="cd08367">
    <property type="entry name" value="P53"/>
    <property type="match status" value="1"/>
</dbReference>
<dbReference type="CDD" id="cd09571">
    <property type="entry name" value="SAM_tumor-p73"/>
    <property type="match status" value="1"/>
</dbReference>
<dbReference type="FunFam" id="2.60.40.720:FF:000002">
    <property type="entry name" value="Cellular tumor antigen p53"/>
    <property type="match status" value="1"/>
</dbReference>
<dbReference type="FunFam" id="1.10.150.50:FF:000020">
    <property type="entry name" value="Tumor protein 63 (p63)"/>
    <property type="match status" value="1"/>
</dbReference>
<dbReference type="Gene3D" id="2.60.40.720">
    <property type="match status" value="1"/>
</dbReference>
<dbReference type="Gene3D" id="4.10.170.10">
    <property type="entry name" value="p53-like tetramerisation domain"/>
    <property type="match status" value="1"/>
</dbReference>
<dbReference type="Gene3D" id="1.10.150.50">
    <property type="entry name" value="Transcription Factor, Ets-1"/>
    <property type="match status" value="1"/>
</dbReference>
<dbReference type="InterPro" id="IPR008967">
    <property type="entry name" value="p53-like_TF_DNA-bd_sf"/>
</dbReference>
<dbReference type="InterPro" id="IPR012346">
    <property type="entry name" value="p53/RUNT-type_TF_DNA-bd_sf"/>
</dbReference>
<dbReference type="InterPro" id="IPR011615">
    <property type="entry name" value="p53_DNA-bd"/>
</dbReference>
<dbReference type="InterPro" id="IPR036674">
    <property type="entry name" value="p53_tetramer_sf"/>
</dbReference>
<dbReference type="InterPro" id="IPR010991">
    <property type="entry name" value="p53_tetrameristn"/>
</dbReference>
<dbReference type="InterPro" id="IPR002117">
    <property type="entry name" value="p53_tumour_suppressor"/>
</dbReference>
<dbReference type="InterPro" id="IPR001660">
    <property type="entry name" value="SAM"/>
</dbReference>
<dbReference type="InterPro" id="IPR013761">
    <property type="entry name" value="SAM/pointed_sf"/>
</dbReference>
<dbReference type="InterPro" id="IPR037612">
    <property type="entry name" value="Tumour-p73_SAM"/>
</dbReference>
<dbReference type="PANTHER" id="PTHR11447">
    <property type="entry name" value="CELLULAR TUMOR ANTIGEN P53"/>
    <property type="match status" value="1"/>
</dbReference>
<dbReference type="PANTHER" id="PTHR11447:SF21">
    <property type="entry name" value="TUMOR PROTEIN P73"/>
    <property type="match status" value="1"/>
</dbReference>
<dbReference type="Pfam" id="PF00870">
    <property type="entry name" value="P53"/>
    <property type="match status" value="1"/>
</dbReference>
<dbReference type="Pfam" id="PF07710">
    <property type="entry name" value="P53_tetramer"/>
    <property type="match status" value="1"/>
</dbReference>
<dbReference type="Pfam" id="PF07647">
    <property type="entry name" value="SAM_2"/>
    <property type="match status" value="1"/>
</dbReference>
<dbReference type="PRINTS" id="PR00386">
    <property type="entry name" value="P53SUPPRESSR"/>
</dbReference>
<dbReference type="SMART" id="SM00454">
    <property type="entry name" value="SAM"/>
    <property type="match status" value="1"/>
</dbReference>
<dbReference type="SUPFAM" id="SSF47719">
    <property type="entry name" value="p53 tetramerization domain"/>
    <property type="match status" value="1"/>
</dbReference>
<dbReference type="SUPFAM" id="SSF49417">
    <property type="entry name" value="p53-like transcription factors"/>
    <property type="match status" value="1"/>
</dbReference>
<dbReference type="SUPFAM" id="SSF47769">
    <property type="entry name" value="SAM/Pointed domain"/>
    <property type="match status" value="1"/>
</dbReference>
<dbReference type="PROSITE" id="PS00348">
    <property type="entry name" value="P53"/>
    <property type="match status" value="1"/>
</dbReference>
<name>P73_CHLAE</name>